<protein>
    <recommendedName>
        <fullName evidence="1">Methionine import ATP-binding protein MetN</fullName>
        <ecNumber evidence="1">7.4.2.11</ecNumber>
    </recommendedName>
</protein>
<organism>
    <name type="scientific">Lactococcus lactis subsp. cremoris (strain SK11)</name>
    <dbReference type="NCBI Taxonomy" id="272622"/>
    <lineage>
        <taxon>Bacteria</taxon>
        <taxon>Bacillati</taxon>
        <taxon>Bacillota</taxon>
        <taxon>Bacilli</taxon>
        <taxon>Lactobacillales</taxon>
        <taxon>Streptococcaceae</taxon>
        <taxon>Lactococcus</taxon>
        <taxon>Lactococcus cremoris subsp. cremoris</taxon>
    </lineage>
</organism>
<accession>Q032A0</accession>
<evidence type="ECO:0000255" key="1">
    <source>
        <dbReference type="HAMAP-Rule" id="MF_01719"/>
    </source>
</evidence>
<comment type="function">
    <text evidence="1">Part of the ABC transporter complex MetNIQ involved in methionine import. Responsible for energy coupling to the transport system.</text>
</comment>
<comment type="catalytic activity">
    <reaction evidence="1">
        <text>L-methionine(out) + ATP + H2O = L-methionine(in) + ADP + phosphate + H(+)</text>
        <dbReference type="Rhea" id="RHEA:29779"/>
        <dbReference type="ChEBI" id="CHEBI:15377"/>
        <dbReference type="ChEBI" id="CHEBI:15378"/>
        <dbReference type="ChEBI" id="CHEBI:30616"/>
        <dbReference type="ChEBI" id="CHEBI:43474"/>
        <dbReference type="ChEBI" id="CHEBI:57844"/>
        <dbReference type="ChEBI" id="CHEBI:456216"/>
        <dbReference type="EC" id="7.4.2.11"/>
    </reaction>
</comment>
<comment type="catalytic activity">
    <reaction evidence="1">
        <text>D-methionine(out) + ATP + H2O = D-methionine(in) + ADP + phosphate + H(+)</text>
        <dbReference type="Rhea" id="RHEA:29767"/>
        <dbReference type="ChEBI" id="CHEBI:15377"/>
        <dbReference type="ChEBI" id="CHEBI:15378"/>
        <dbReference type="ChEBI" id="CHEBI:30616"/>
        <dbReference type="ChEBI" id="CHEBI:43474"/>
        <dbReference type="ChEBI" id="CHEBI:57932"/>
        <dbReference type="ChEBI" id="CHEBI:456216"/>
        <dbReference type="EC" id="7.4.2.11"/>
    </reaction>
</comment>
<comment type="subunit">
    <text evidence="1">The complex is composed of two ATP-binding proteins (MetN), two transmembrane proteins (MetI) and a solute-binding protein (MetQ).</text>
</comment>
<comment type="subcellular location">
    <subcellularLocation>
        <location evidence="1">Cell membrane</location>
        <topology evidence="1">Peripheral membrane protein</topology>
    </subcellularLocation>
</comment>
<comment type="similarity">
    <text evidence="1">Belongs to the ABC transporter superfamily. Methionine importer (TC 3.A.1.24) family.</text>
</comment>
<reference key="1">
    <citation type="journal article" date="2006" name="Proc. Natl. Acad. Sci. U.S.A.">
        <title>Comparative genomics of the lactic acid bacteria.</title>
        <authorList>
            <person name="Makarova K.S."/>
            <person name="Slesarev A."/>
            <person name="Wolf Y.I."/>
            <person name="Sorokin A."/>
            <person name="Mirkin B."/>
            <person name="Koonin E.V."/>
            <person name="Pavlov A."/>
            <person name="Pavlova N."/>
            <person name="Karamychev V."/>
            <person name="Polouchine N."/>
            <person name="Shakhova V."/>
            <person name="Grigoriev I."/>
            <person name="Lou Y."/>
            <person name="Rohksar D."/>
            <person name="Lucas S."/>
            <person name="Huang K."/>
            <person name="Goodstein D.M."/>
            <person name="Hawkins T."/>
            <person name="Plengvidhya V."/>
            <person name="Welker D."/>
            <person name="Hughes J."/>
            <person name="Goh Y."/>
            <person name="Benson A."/>
            <person name="Baldwin K."/>
            <person name="Lee J.-H."/>
            <person name="Diaz-Muniz I."/>
            <person name="Dosti B."/>
            <person name="Smeianov V."/>
            <person name="Wechter W."/>
            <person name="Barabote R."/>
            <person name="Lorca G."/>
            <person name="Altermann E."/>
            <person name="Barrangou R."/>
            <person name="Ganesan B."/>
            <person name="Xie Y."/>
            <person name="Rawsthorne H."/>
            <person name="Tamir D."/>
            <person name="Parker C."/>
            <person name="Breidt F."/>
            <person name="Broadbent J.R."/>
            <person name="Hutkins R."/>
            <person name="O'Sullivan D."/>
            <person name="Steele J."/>
            <person name="Unlu G."/>
            <person name="Saier M.H. Jr."/>
            <person name="Klaenhammer T."/>
            <person name="Richardson P."/>
            <person name="Kozyavkin S."/>
            <person name="Weimer B.C."/>
            <person name="Mills D.A."/>
        </authorList>
    </citation>
    <scope>NUCLEOTIDE SEQUENCE [LARGE SCALE GENOMIC DNA]</scope>
    <source>
        <strain>SK11</strain>
    </source>
</reference>
<proteinExistence type="inferred from homology"/>
<dbReference type="EC" id="7.4.2.11" evidence="1"/>
<dbReference type="EMBL" id="CP000425">
    <property type="protein sequence ID" value="ABJ71972.1"/>
    <property type="molecule type" value="Genomic_DNA"/>
</dbReference>
<dbReference type="RefSeq" id="WP_011675380.1">
    <property type="nucleotide sequence ID" value="NC_008527.1"/>
</dbReference>
<dbReference type="SMR" id="Q032A0"/>
<dbReference type="KEGG" id="llc:LACR_0365"/>
<dbReference type="HOGENOM" id="CLU_000604_1_3_9"/>
<dbReference type="Proteomes" id="UP000000240">
    <property type="component" value="Chromosome"/>
</dbReference>
<dbReference type="GO" id="GO:0005886">
    <property type="term" value="C:plasma membrane"/>
    <property type="evidence" value="ECO:0007669"/>
    <property type="project" value="UniProtKB-SubCell"/>
</dbReference>
<dbReference type="GO" id="GO:0033232">
    <property type="term" value="F:ABC-type D-methionine transporter activity"/>
    <property type="evidence" value="ECO:0007669"/>
    <property type="project" value="UniProtKB-EC"/>
</dbReference>
<dbReference type="GO" id="GO:0005524">
    <property type="term" value="F:ATP binding"/>
    <property type="evidence" value="ECO:0007669"/>
    <property type="project" value="UniProtKB-KW"/>
</dbReference>
<dbReference type="GO" id="GO:0016887">
    <property type="term" value="F:ATP hydrolysis activity"/>
    <property type="evidence" value="ECO:0007669"/>
    <property type="project" value="InterPro"/>
</dbReference>
<dbReference type="CDD" id="cd03258">
    <property type="entry name" value="ABC_MetN_methionine_transporter"/>
    <property type="match status" value="1"/>
</dbReference>
<dbReference type="Gene3D" id="3.30.70.260">
    <property type="match status" value="1"/>
</dbReference>
<dbReference type="Gene3D" id="3.40.50.300">
    <property type="entry name" value="P-loop containing nucleotide triphosphate hydrolases"/>
    <property type="match status" value="1"/>
</dbReference>
<dbReference type="InterPro" id="IPR003593">
    <property type="entry name" value="AAA+_ATPase"/>
</dbReference>
<dbReference type="InterPro" id="IPR003439">
    <property type="entry name" value="ABC_transporter-like_ATP-bd"/>
</dbReference>
<dbReference type="InterPro" id="IPR017871">
    <property type="entry name" value="ABC_transporter-like_CS"/>
</dbReference>
<dbReference type="InterPro" id="IPR045865">
    <property type="entry name" value="ACT-like_dom_sf"/>
</dbReference>
<dbReference type="InterPro" id="IPR041701">
    <property type="entry name" value="MetN_ABC"/>
</dbReference>
<dbReference type="InterPro" id="IPR050086">
    <property type="entry name" value="MetN_ABC_transporter-like"/>
</dbReference>
<dbReference type="InterPro" id="IPR018449">
    <property type="entry name" value="NIL_domain"/>
</dbReference>
<dbReference type="InterPro" id="IPR027417">
    <property type="entry name" value="P-loop_NTPase"/>
</dbReference>
<dbReference type="PANTHER" id="PTHR43166">
    <property type="entry name" value="AMINO ACID IMPORT ATP-BINDING PROTEIN"/>
    <property type="match status" value="1"/>
</dbReference>
<dbReference type="PANTHER" id="PTHR43166:SF30">
    <property type="entry name" value="METHIONINE IMPORT ATP-BINDING PROTEIN METN"/>
    <property type="match status" value="1"/>
</dbReference>
<dbReference type="Pfam" id="PF00005">
    <property type="entry name" value="ABC_tran"/>
    <property type="match status" value="1"/>
</dbReference>
<dbReference type="Pfam" id="PF09383">
    <property type="entry name" value="NIL"/>
    <property type="match status" value="1"/>
</dbReference>
<dbReference type="SMART" id="SM00382">
    <property type="entry name" value="AAA"/>
    <property type="match status" value="1"/>
</dbReference>
<dbReference type="SMART" id="SM00930">
    <property type="entry name" value="NIL"/>
    <property type="match status" value="1"/>
</dbReference>
<dbReference type="SUPFAM" id="SSF55021">
    <property type="entry name" value="ACT-like"/>
    <property type="match status" value="1"/>
</dbReference>
<dbReference type="SUPFAM" id="SSF52540">
    <property type="entry name" value="P-loop containing nucleoside triphosphate hydrolases"/>
    <property type="match status" value="1"/>
</dbReference>
<dbReference type="PROSITE" id="PS00211">
    <property type="entry name" value="ABC_TRANSPORTER_1"/>
    <property type="match status" value="1"/>
</dbReference>
<dbReference type="PROSITE" id="PS50893">
    <property type="entry name" value="ABC_TRANSPORTER_2"/>
    <property type="match status" value="1"/>
</dbReference>
<dbReference type="PROSITE" id="PS51264">
    <property type="entry name" value="METN"/>
    <property type="match status" value="1"/>
</dbReference>
<gene>
    <name evidence="1" type="primary">metN</name>
    <name type="ordered locus">LACR_0365</name>
</gene>
<keyword id="KW-0029">Amino-acid transport</keyword>
<keyword id="KW-0067">ATP-binding</keyword>
<keyword id="KW-1003">Cell membrane</keyword>
<keyword id="KW-0472">Membrane</keyword>
<keyword id="KW-0547">Nucleotide-binding</keyword>
<keyword id="KW-1278">Translocase</keyword>
<keyword id="KW-0813">Transport</keyword>
<name>METN_LACLS</name>
<feature type="chain" id="PRO_0000277685" description="Methionine import ATP-binding protein MetN">
    <location>
        <begin position="1"/>
        <end position="368"/>
    </location>
</feature>
<feature type="domain" description="ABC transporter" evidence="1">
    <location>
        <begin position="5"/>
        <end position="260"/>
    </location>
</feature>
<feature type="binding site" evidence="1">
    <location>
        <begin position="41"/>
        <end position="48"/>
    </location>
    <ligand>
        <name>ATP</name>
        <dbReference type="ChEBI" id="CHEBI:30616"/>
    </ligand>
</feature>
<sequence length="368" mass="40959">MTAIIELNNLSVQFHQKGRLVTAVKNATLHIEKGDIYGVIGYSGAGKSTLVRTINLLQKPTEGQIVINGEKIFDSANPVKFTGAKLREFRQKIGMIFQHFNLLSEKTVFNNVAFALQHSQIEDKNGKKRYLTKKEKNDKVTELLKLVDLADLSDKYPAQLSGGQKQRVAIARALTNDPEILISDEGTSALDPKTTNQILDLLKSLHEKLGITVVLITHEMQVVKEIANKVAVMQNGEIIEQNSLIDIFAQPKEALTKQFIETTSSVNRFIASLSKTELLAQLADDEELIHLDYSGSELEDPVVSDITKKFDVTTNIFYGNVELLQGQPFGSLVLTLKGSSEHRAAAKAYFVERHLKFEVLGKIERTVD</sequence>